<accession>P69542</accession>
<accession>P03669</accession>
<reference key="1">
    <citation type="journal article" date="1978" name="Nucleic Acids Res.">
        <title>Nucleotide sequence of bacteriophage fd DNA.</title>
        <authorList>
            <person name="Beck E."/>
            <person name="Sommer R."/>
            <person name="Auerswald E.A."/>
            <person name="Kurz C."/>
            <person name="Zink B."/>
            <person name="Osterburg G."/>
            <person name="Schaller H."/>
            <person name="Sugimoto K."/>
            <person name="Sugisaki H."/>
            <person name="Okamoto T."/>
            <person name="Takanami M."/>
        </authorList>
    </citation>
    <scope>NUCLEOTIDE SEQUENCE [GENOMIC DNA]</scope>
    <source>
        <strain>478 / Heidelberg</strain>
    </source>
</reference>
<reference key="2">
    <citation type="journal article" date="1974" name="FEBS Lett.">
        <title>The amino acid sequence of a DNA binding protein, the gene 5 product of fd filamentous bacteriophage.</title>
        <authorList>
            <person name="Nakashima Y."/>
            <person name="Dunker A.K."/>
            <person name="Marvin D.A."/>
            <person name="Konigsberg W."/>
        </authorList>
    </citation>
    <scope>PROTEIN SEQUENCE</scope>
</reference>
<reference key="3">
    <citation type="journal article" date="1974" name="FEBS Lett.">
        <authorList>
            <person name="Nakashima Y."/>
            <person name="Dunker A.K."/>
            <person name="Marvin D.A."/>
            <person name="Konigsberg W."/>
        </authorList>
    </citation>
    <scope>SEQUENCE REVISION</scope>
</reference>
<reference key="4">
    <citation type="journal article" date="1980" name="Biophys. J.">
        <title>The structure of a DNA unwinding protein and its complexes with oligodeoxynucleotides by X-ray diffraction.</title>
        <authorList>
            <person name="McPherson A."/>
            <person name="Jurnak F."/>
            <person name="Wang A."/>
            <person name="Kolpak F."/>
            <person name="Rich A."/>
            <person name="Molineux I."/>
            <person name="Fitzgerald P."/>
        </authorList>
    </citation>
    <scope>X-RAY CRYSTALLOGRAPHY (2.3 ANGSTROMS)</scope>
</reference>
<reference key="5">
    <citation type="journal article" date="1983" name="J. Mol. Biol.">
        <title>Refined structure of the gene 5 DNA binding protein from bacteriophage fd.</title>
        <authorList>
            <person name="Brayer G.D."/>
            <person name="McPherson A."/>
        </authorList>
    </citation>
    <scope>X-RAY CRYSTALLOGRAPHY (2.3 ANGSTROMS)</scope>
</reference>
<gene>
    <name type="primary">V</name>
</gene>
<protein>
    <recommendedName>
        <fullName>DNA-Binding protein G5P</fullName>
        <shortName>G5P</shortName>
    </recommendedName>
    <alternativeName>
        <fullName>GPV</fullName>
    </alternativeName>
    <alternativeName>
        <fullName>Single-stranded DNA-binding protein</fullName>
    </alternativeName>
</protein>
<sequence>MIKVEIKPSQAQFTTRSGVSRQGKPYSLNEQLCYVDLGNEYPVLVKITLDEGQPAYAPGLYTVHLSSFKVGQFGSLMIDRLRLVPAK</sequence>
<evidence type="ECO:0000250" key="1"/>
<evidence type="ECO:0000305" key="2"/>
<evidence type="ECO:0007829" key="3">
    <source>
        <dbReference type="PDB" id="2GN5"/>
    </source>
</evidence>
<comment type="function">
    <text evidence="1">Binds to DNA in a highly cooperative manner without pronounced sequence specificity. During synthesis of the single-stranded (progeny) viral DNA, prevents the conversion into the double-stranded replicative form. G5P is displaced by the capsid protein G8P during phage assembly on the inner bacterial membrane (By similarity).</text>
</comment>
<comment type="subunit">
    <text>Homodimer.</text>
</comment>
<comment type="similarity">
    <text evidence="2">Belongs to the inovirus G5P protein family.</text>
</comment>
<organism>
    <name type="scientific">Enterobacteria phage fd</name>
    <name type="common">Bacteriophage fd</name>
    <dbReference type="NCBI Taxonomy" id="2847073"/>
    <lineage>
        <taxon>Viruses</taxon>
        <taxon>Monodnaviria</taxon>
        <taxon>Loebvirae</taxon>
        <taxon>Hofneiviricota</taxon>
        <taxon>Faserviricetes</taxon>
        <taxon>Tubulavirales</taxon>
        <taxon>Inoviridae</taxon>
        <taxon>Inovirus</taxon>
        <taxon>Enterobacteria phage M13</taxon>
    </lineage>
</organism>
<organismHost>
    <name type="scientific">Escherichia coli</name>
    <dbReference type="NCBI Taxonomy" id="562"/>
</organismHost>
<feature type="chain" id="PRO_0000098194" description="DNA-Binding protein G5P">
    <location>
        <begin position="1"/>
        <end position="87"/>
    </location>
</feature>
<feature type="site" description="Involved in DNA binding">
    <location>
        <position position="16"/>
    </location>
</feature>
<feature type="site" description="Involved in DNA binding">
    <location>
        <position position="21"/>
    </location>
</feature>
<feature type="site" description="Involved in DNA binding">
    <location>
        <position position="26"/>
    </location>
</feature>
<feature type="site" description="Involved in DNA binding">
    <location>
        <position position="34"/>
    </location>
</feature>
<feature type="site" description="Involved in DNA binding, and in the dimer-dimer interactions of the protein-ssDNA complex">
    <location>
        <position position="41"/>
    </location>
</feature>
<feature type="site" description="Involved in DNA binding">
    <location>
        <position position="46"/>
    </location>
</feature>
<feature type="turn" evidence="3">
    <location>
        <begin position="24"/>
        <end position="26"/>
    </location>
</feature>
<feature type="strand" evidence="3">
    <location>
        <begin position="39"/>
        <end position="41"/>
    </location>
</feature>
<feature type="strand" evidence="3">
    <location>
        <begin position="71"/>
        <end position="74"/>
    </location>
</feature>
<proteinExistence type="evidence at protein level"/>
<name>G5P_BPFD</name>
<dbReference type="EMBL" id="J02451">
    <property type="protein sequence ID" value="AAA32305.1"/>
    <property type="molecule type" value="Genomic_DNA"/>
</dbReference>
<dbReference type="PIR" id="A04271">
    <property type="entry name" value="DDBPFD"/>
</dbReference>
<dbReference type="PDB" id="2GN5">
    <property type="method" value="X-ray"/>
    <property type="resolution" value="2.30 A"/>
    <property type="chains" value="A=1-87"/>
</dbReference>
<dbReference type="PDBsum" id="2GN5"/>
<dbReference type="BMRB" id="P69542"/>
<dbReference type="SMR" id="P69542"/>
<dbReference type="KEGG" id="vg:22475000"/>
<dbReference type="EvolutionaryTrace" id="P69542"/>
<dbReference type="Proteomes" id="UP000001836">
    <property type="component" value="Genome"/>
</dbReference>
<dbReference type="GO" id="GO:0003697">
    <property type="term" value="F:single-stranded DNA binding"/>
    <property type="evidence" value="ECO:0007669"/>
    <property type="project" value="InterPro"/>
</dbReference>
<dbReference type="GO" id="GO:0006260">
    <property type="term" value="P:DNA replication"/>
    <property type="evidence" value="ECO:0007669"/>
    <property type="project" value="UniProtKB-KW"/>
</dbReference>
<dbReference type="GO" id="GO:0039684">
    <property type="term" value="P:rolling circle single-stranded viral DNA replication"/>
    <property type="evidence" value="ECO:0000314"/>
    <property type="project" value="UniProtKB"/>
</dbReference>
<dbReference type="FunFam" id="2.40.50.140:FF:000515">
    <property type="entry name" value="DNA-Binding protein G5P"/>
    <property type="match status" value="1"/>
</dbReference>
<dbReference type="Gene3D" id="2.40.50.140">
    <property type="entry name" value="Nucleic acid-binding proteins"/>
    <property type="match status" value="1"/>
</dbReference>
<dbReference type="InterPro" id="IPR012340">
    <property type="entry name" value="NA-bd_OB-fold"/>
</dbReference>
<dbReference type="InterPro" id="IPR003512">
    <property type="entry name" value="Phage_M13_G5P_DNA-bd"/>
</dbReference>
<dbReference type="Pfam" id="PF02303">
    <property type="entry name" value="Phage_DNA_bind"/>
    <property type="match status" value="1"/>
</dbReference>
<dbReference type="SUPFAM" id="SSF50249">
    <property type="entry name" value="Nucleic acid-binding proteins"/>
    <property type="match status" value="1"/>
</dbReference>
<keyword id="KW-0002">3D-structure</keyword>
<keyword id="KW-0903">Direct protein sequencing</keyword>
<keyword id="KW-0235">DNA replication</keyword>
<keyword id="KW-0238">DNA-binding</keyword>